<reference key="1">
    <citation type="journal article" date="2004" name="Gene">
        <title>The complete nucleotide sequence of wild rice (Oryza nivara) chloroplast genome: first genome wide comparative sequence analysis of wild and cultivated rice.</title>
        <authorList>
            <person name="Masood M.S."/>
            <person name="Nishikawa T."/>
            <person name="Fukuoka S."/>
            <person name="Njenga P.K."/>
            <person name="Tsudzuki T."/>
            <person name="Kadowaki K."/>
        </authorList>
    </citation>
    <scope>NUCLEOTIDE SEQUENCE [LARGE SCALE GENOMIC DNA]</scope>
    <source>
        <strain evidence="3">cv. SL10</strain>
    </source>
</reference>
<accession>Q6END8</accession>
<name>RR8_ORYNI</name>
<geneLocation type="chloroplast"/>
<feature type="chain" id="PRO_0000126584" description="Small ribosomal subunit protein uS8c">
    <location>
        <begin position="1"/>
        <end position="136"/>
    </location>
</feature>
<dbReference type="EMBL" id="AP006728">
    <property type="protein sequence ID" value="BAD26814.1"/>
    <property type="molecule type" value="Genomic_DNA"/>
</dbReference>
<dbReference type="RefSeq" id="YP_052785.1">
    <property type="nucleotide sequence ID" value="NC_005973.1"/>
</dbReference>
<dbReference type="SMR" id="Q6END8"/>
<dbReference type="STRING" id="4536.Q6END8"/>
<dbReference type="GeneID" id="2885895"/>
<dbReference type="Proteomes" id="UP000006591">
    <property type="component" value="Chloroplast"/>
</dbReference>
<dbReference type="GO" id="GO:0009507">
    <property type="term" value="C:chloroplast"/>
    <property type="evidence" value="ECO:0007669"/>
    <property type="project" value="UniProtKB-SubCell"/>
</dbReference>
<dbReference type="GO" id="GO:0009536">
    <property type="term" value="C:plastid"/>
    <property type="evidence" value="ECO:0000305"/>
    <property type="project" value="Gramene"/>
</dbReference>
<dbReference type="GO" id="GO:1990904">
    <property type="term" value="C:ribonucleoprotein complex"/>
    <property type="evidence" value="ECO:0007669"/>
    <property type="project" value="UniProtKB-KW"/>
</dbReference>
<dbReference type="GO" id="GO:0005840">
    <property type="term" value="C:ribosome"/>
    <property type="evidence" value="ECO:0007669"/>
    <property type="project" value="UniProtKB-KW"/>
</dbReference>
<dbReference type="GO" id="GO:0019843">
    <property type="term" value="F:rRNA binding"/>
    <property type="evidence" value="ECO:0007669"/>
    <property type="project" value="UniProtKB-UniRule"/>
</dbReference>
<dbReference type="GO" id="GO:0003735">
    <property type="term" value="F:structural constituent of ribosome"/>
    <property type="evidence" value="ECO:0007669"/>
    <property type="project" value="InterPro"/>
</dbReference>
<dbReference type="GO" id="GO:0006412">
    <property type="term" value="P:translation"/>
    <property type="evidence" value="ECO:0007669"/>
    <property type="project" value="UniProtKB-UniRule"/>
</dbReference>
<dbReference type="FunFam" id="3.30.1490.10:FF:000001">
    <property type="entry name" value="30S ribosomal protein S8"/>
    <property type="match status" value="1"/>
</dbReference>
<dbReference type="FunFam" id="3.30.1370.30:FF:000004">
    <property type="entry name" value="30S ribosomal protein S8, chloroplastic"/>
    <property type="match status" value="1"/>
</dbReference>
<dbReference type="Gene3D" id="3.30.1370.30">
    <property type="match status" value="1"/>
</dbReference>
<dbReference type="Gene3D" id="3.30.1490.10">
    <property type="match status" value="1"/>
</dbReference>
<dbReference type="HAMAP" id="MF_01302_B">
    <property type="entry name" value="Ribosomal_uS8_B"/>
    <property type="match status" value="1"/>
</dbReference>
<dbReference type="InterPro" id="IPR000630">
    <property type="entry name" value="Ribosomal_uS8"/>
</dbReference>
<dbReference type="InterPro" id="IPR047863">
    <property type="entry name" value="Ribosomal_uS8_CS"/>
</dbReference>
<dbReference type="InterPro" id="IPR035987">
    <property type="entry name" value="Ribosomal_uS8_sf"/>
</dbReference>
<dbReference type="NCBIfam" id="NF001109">
    <property type="entry name" value="PRK00136.1"/>
    <property type="match status" value="1"/>
</dbReference>
<dbReference type="PANTHER" id="PTHR11758">
    <property type="entry name" value="40S RIBOSOMAL PROTEIN S15A"/>
    <property type="match status" value="1"/>
</dbReference>
<dbReference type="Pfam" id="PF00410">
    <property type="entry name" value="Ribosomal_S8"/>
    <property type="match status" value="1"/>
</dbReference>
<dbReference type="SUPFAM" id="SSF56047">
    <property type="entry name" value="Ribosomal protein S8"/>
    <property type="match status" value="1"/>
</dbReference>
<dbReference type="PROSITE" id="PS00053">
    <property type="entry name" value="RIBOSOMAL_S8"/>
    <property type="match status" value="1"/>
</dbReference>
<protein>
    <recommendedName>
        <fullName evidence="2">Small ribosomal subunit protein uS8c</fullName>
    </recommendedName>
    <alternativeName>
        <fullName>30S ribosomal protein S8, chloroplastic</fullName>
    </alternativeName>
</protein>
<proteinExistence type="inferred from homology"/>
<organism>
    <name type="scientific">Oryza nivara</name>
    <name type="common">Indian wild rice</name>
    <name type="synonym">Oryza sativa f. spontanea</name>
    <dbReference type="NCBI Taxonomy" id="4536"/>
    <lineage>
        <taxon>Eukaryota</taxon>
        <taxon>Viridiplantae</taxon>
        <taxon>Streptophyta</taxon>
        <taxon>Embryophyta</taxon>
        <taxon>Tracheophyta</taxon>
        <taxon>Spermatophyta</taxon>
        <taxon>Magnoliopsida</taxon>
        <taxon>Liliopsida</taxon>
        <taxon>Poales</taxon>
        <taxon>Poaceae</taxon>
        <taxon>BOP clade</taxon>
        <taxon>Oryzoideae</taxon>
        <taxon>Oryzeae</taxon>
        <taxon>Oryzinae</taxon>
        <taxon>Oryza</taxon>
    </lineage>
</organism>
<comment type="function">
    <text evidence="1">One of the primary rRNA binding proteins, it binds directly to 16S rRNA central domain where it helps coordinate assembly of the platform of the 30S subunit.</text>
</comment>
<comment type="subunit">
    <text evidence="1">Part of the 30S ribosomal subunit.</text>
</comment>
<comment type="subcellular location">
    <subcellularLocation>
        <location>Plastid</location>
        <location>Chloroplast</location>
    </subcellularLocation>
</comment>
<comment type="similarity">
    <text evidence="2">Belongs to the universal ribosomal protein uS8 family.</text>
</comment>
<gene>
    <name type="primary">rps8</name>
</gene>
<evidence type="ECO:0000250" key="1"/>
<evidence type="ECO:0000305" key="2"/>
<evidence type="ECO:0000312" key="3">
    <source>
        <dbReference type="Proteomes" id="UP000006591"/>
    </source>
</evidence>
<sequence>MGKDTIADLLTSIRNADMNKKGTVRVVSTNITENIVKILLREGFIESVRKHQESNRYFLVSTLRHQKRKTRKGIYRTRTFLKRISRPGLRIYANYQGIPKVLGGMGIAILSTSRGIMTDREARLNRIGGEVLCYIW</sequence>
<keyword id="KW-0150">Chloroplast</keyword>
<keyword id="KW-0934">Plastid</keyword>
<keyword id="KW-1185">Reference proteome</keyword>
<keyword id="KW-0687">Ribonucleoprotein</keyword>
<keyword id="KW-0689">Ribosomal protein</keyword>
<keyword id="KW-0694">RNA-binding</keyword>
<keyword id="KW-0699">rRNA-binding</keyword>